<gene>
    <name evidence="1" type="primary">rnfH</name>
    <name type="ordered locus">Pmen_3629</name>
</gene>
<reference key="1">
    <citation type="submission" date="2007-04" db="EMBL/GenBank/DDBJ databases">
        <title>Complete sequence of Pseudomonas mendocina ymp.</title>
        <authorList>
            <consortium name="US DOE Joint Genome Institute"/>
            <person name="Copeland A."/>
            <person name="Lucas S."/>
            <person name="Lapidus A."/>
            <person name="Barry K."/>
            <person name="Glavina del Rio T."/>
            <person name="Dalin E."/>
            <person name="Tice H."/>
            <person name="Pitluck S."/>
            <person name="Kiss H."/>
            <person name="Brettin T."/>
            <person name="Detter J.C."/>
            <person name="Bruce D."/>
            <person name="Han C."/>
            <person name="Schmutz J."/>
            <person name="Larimer F."/>
            <person name="Land M."/>
            <person name="Hauser L."/>
            <person name="Kyrpides N."/>
            <person name="Mikhailova N."/>
            <person name="Hersman L."/>
            <person name="Dubois J."/>
            <person name="Maurice P."/>
            <person name="Richardson P."/>
        </authorList>
    </citation>
    <scope>NUCLEOTIDE SEQUENCE [LARGE SCALE GENOMIC DNA]</scope>
    <source>
        <strain>ymp</strain>
    </source>
</reference>
<organism>
    <name type="scientific">Ectopseudomonas mendocina (strain ymp)</name>
    <name type="common">Pseudomonas mendocina</name>
    <dbReference type="NCBI Taxonomy" id="399739"/>
    <lineage>
        <taxon>Bacteria</taxon>
        <taxon>Pseudomonadati</taxon>
        <taxon>Pseudomonadota</taxon>
        <taxon>Gammaproteobacteria</taxon>
        <taxon>Pseudomonadales</taxon>
        <taxon>Pseudomonadaceae</taxon>
        <taxon>Ectopseudomonas</taxon>
    </lineage>
</organism>
<name>RNFH_ECTM1</name>
<proteinExistence type="inferred from homology"/>
<feature type="chain" id="PRO_1000060335" description="Protein RnfH">
    <location>
        <begin position="1"/>
        <end position="106"/>
    </location>
</feature>
<sequence length="106" mass="11901">MDNPNIAIEVVYALADRQKLLRLSVPVGTTVREAALRSGMQQFFPELDLHHAPLGIFGKAVAKPEERVLEEGERVEIYRPLIADPKEVRKQRAAKAKTREEGEEPA</sequence>
<evidence type="ECO:0000255" key="1">
    <source>
        <dbReference type="HAMAP-Rule" id="MF_00460"/>
    </source>
</evidence>
<comment type="similarity">
    <text evidence="1">Belongs to the UPF0125 (RnfH) family.</text>
</comment>
<protein>
    <recommendedName>
        <fullName evidence="1">Protein RnfH</fullName>
    </recommendedName>
</protein>
<dbReference type="EMBL" id="CP000680">
    <property type="protein sequence ID" value="ABP86377.1"/>
    <property type="molecule type" value="Genomic_DNA"/>
</dbReference>
<dbReference type="SMR" id="A4XYG1"/>
<dbReference type="STRING" id="399739.Pmen_3629"/>
<dbReference type="KEGG" id="pmy:Pmen_3629"/>
<dbReference type="PATRIC" id="fig|399739.8.peg.3678"/>
<dbReference type="eggNOG" id="COG2914">
    <property type="taxonomic scope" value="Bacteria"/>
</dbReference>
<dbReference type="HOGENOM" id="CLU_150721_1_0_6"/>
<dbReference type="OrthoDB" id="9796575at2"/>
<dbReference type="Gene3D" id="3.10.20.280">
    <property type="entry name" value="RnfH-like"/>
    <property type="match status" value="1"/>
</dbReference>
<dbReference type="HAMAP" id="MF_00460">
    <property type="entry name" value="UPF0125_RnfH"/>
    <property type="match status" value="1"/>
</dbReference>
<dbReference type="InterPro" id="IPR016155">
    <property type="entry name" value="Mopterin_synth/thiamin_S_b"/>
</dbReference>
<dbReference type="InterPro" id="IPR005346">
    <property type="entry name" value="RnfH"/>
</dbReference>
<dbReference type="InterPro" id="IPR037021">
    <property type="entry name" value="RnfH_sf"/>
</dbReference>
<dbReference type="NCBIfam" id="NF002490">
    <property type="entry name" value="PRK01777.1"/>
    <property type="match status" value="1"/>
</dbReference>
<dbReference type="PANTHER" id="PTHR37483">
    <property type="entry name" value="UPF0125 PROTEIN RATB"/>
    <property type="match status" value="1"/>
</dbReference>
<dbReference type="PANTHER" id="PTHR37483:SF1">
    <property type="entry name" value="UPF0125 PROTEIN RATB"/>
    <property type="match status" value="1"/>
</dbReference>
<dbReference type="Pfam" id="PF03658">
    <property type="entry name" value="Ub-RnfH"/>
    <property type="match status" value="1"/>
</dbReference>
<dbReference type="SUPFAM" id="SSF54285">
    <property type="entry name" value="MoaD/ThiS"/>
    <property type="match status" value="1"/>
</dbReference>
<accession>A4XYG1</accession>